<gene>
    <name type="primary">rapC</name>
    <name type="ORF">DDB_G0270340</name>
</gene>
<organism>
    <name type="scientific">Dictyostelium discoideum</name>
    <name type="common">Social amoeba</name>
    <dbReference type="NCBI Taxonomy" id="44689"/>
    <lineage>
        <taxon>Eukaryota</taxon>
        <taxon>Amoebozoa</taxon>
        <taxon>Evosea</taxon>
        <taxon>Eumycetozoa</taxon>
        <taxon>Dictyostelia</taxon>
        <taxon>Dictyosteliales</taxon>
        <taxon>Dictyosteliaceae</taxon>
        <taxon>Dictyostelium</taxon>
    </lineage>
</organism>
<sequence>MQTYKVVVLGASGTGKTSLTVRFVNGDFVETYDPTIEDLYRKVIETNKGEHIMLEIMDTSGTERYLAMRDLYIRNAQAFVLVYSITSRVSLLELENIKNYICQVKDRPISQIPMVVLGNKCDLEDTRVVFPEEVEALTKKWGIEDFLETSAKIDMNIQSAYDCLTLQLMSKQSFLNGSSNGKDKKDKKEKKTHKKDSGSNNSSINSSSSSLSVSGGSNLSISSSCSSSSFSNLSNSTSSTSVNNLNQSQTNAPIRTKSKRSLKSAKVDKNPKGKCLIM</sequence>
<protein>
    <recommendedName>
        <fullName>Ras-related protein rapC</fullName>
        <ecNumber evidence="2">3.6.5.2</ecNumber>
    </recommendedName>
</protein>
<evidence type="ECO:0000250" key="1"/>
<evidence type="ECO:0000250" key="2">
    <source>
        <dbReference type="UniProtKB" id="P10114"/>
    </source>
</evidence>
<evidence type="ECO:0000256" key="3">
    <source>
        <dbReference type="SAM" id="MobiDB-lite"/>
    </source>
</evidence>
<evidence type="ECO:0000305" key="4"/>
<keyword id="KW-1003">Cell membrane</keyword>
<keyword id="KW-0342">GTP-binding</keyword>
<keyword id="KW-0378">Hydrolase</keyword>
<keyword id="KW-0449">Lipoprotein</keyword>
<keyword id="KW-0472">Membrane</keyword>
<keyword id="KW-0488">Methylation</keyword>
<keyword id="KW-0547">Nucleotide-binding</keyword>
<keyword id="KW-0636">Prenylation</keyword>
<keyword id="KW-1185">Reference proteome</keyword>
<reference key="1">
    <citation type="journal article" date="2005" name="Nature">
        <title>The genome of the social amoeba Dictyostelium discoideum.</title>
        <authorList>
            <person name="Eichinger L."/>
            <person name="Pachebat J.A."/>
            <person name="Gloeckner G."/>
            <person name="Rajandream M.A."/>
            <person name="Sucgang R."/>
            <person name="Berriman M."/>
            <person name="Song J."/>
            <person name="Olsen R."/>
            <person name="Szafranski K."/>
            <person name="Xu Q."/>
            <person name="Tunggal B."/>
            <person name="Kummerfeld S."/>
            <person name="Madera M."/>
            <person name="Konfortov B.A."/>
            <person name="Rivero F."/>
            <person name="Bankier A.T."/>
            <person name="Lehmann R."/>
            <person name="Hamlin N."/>
            <person name="Davies R."/>
            <person name="Gaudet P."/>
            <person name="Fey P."/>
            <person name="Pilcher K."/>
            <person name="Chen G."/>
            <person name="Saunders D."/>
            <person name="Sodergren E.J."/>
            <person name="Davis P."/>
            <person name="Kerhornou A."/>
            <person name="Nie X."/>
            <person name="Hall N."/>
            <person name="Anjard C."/>
            <person name="Hemphill L."/>
            <person name="Bason N."/>
            <person name="Farbrother P."/>
            <person name="Desany B."/>
            <person name="Just E."/>
            <person name="Morio T."/>
            <person name="Rost R."/>
            <person name="Churcher C.M."/>
            <person name="Cooper J."/>
            <person name="Haydock S."/>
            <person name="van Driessche N."/>
            <person name="Cronin A."/>
            <person name="Goodhead I."/>
            <person name="Muzny D.M."/>
            <person name="Mourier T."/>
            <person name="Pain A."/>
            <person name="Lu M."/>
            <person name="Harper D."/>
            <person name="Lindsay R."/>
            <person name="Hauser H."/>
            <person name="James K.D."/>
            <person name="Quiles M."/>
            <person name="Madan Babu M."/>
            <person name="Saito T."/>
            <person name="Buchrieser C."/>
            <person name="Wardroper A."/>
            <person name="Felder M."/>
            <person name="Thangavelu M."/>
            <person name="Johnson D."/>
            <person name="Knights A."/>
            <person name="Loulseged H."/>
            <person name="Mungall K.L."/>
            <person name="Oliver K."/>
            <person name="Price C."/>
            <person name="Quail M.A."/>
            <person name="Urushihara H."/>
            <person name="Hernandez J."/>
            <person name="Rabbinowitsch E."/>
            <person name="Steffen D."/>
            <person name="Sanders M."/>
            <person name="Ma J."/>
            <person name="Kohara Y."/>
            <person name="Sharp S."/>
            <person name="Simmonds M.N."/>
            <person name="Spiegler S."/>
            <person name="Tivey A."/>
            <person name="Sugano S."/>
            <person name="White B."/>
            <person name="Walker D."/>
            <person name="Woodward J.R."/>
            <person name="Winckler T."/>
            <person name="Tanaka Y."/>
            <person name="Shaulsky G."/>
            <person name="Schleicher M."/>
            <person name="Weinstock G.M."/>
            <person name="Rosenthal A."/>
            <person name="Cox E.C."/>
            <person name="Chisholm R.L."/>
            <person name="Gibbs R.A."/>
            <person name="Loomis W.F."/>
            <person name="Platzer M."/>
            <person name="Kay R.R."/>
            <person name="Williams J.G."/>
            <person name="Dear P.H."/>
            <person name="Noegel A.A."/>
            <person name="Barrell B.G."/>
            <person name="Kuspa A."/>
        </authorList>
    </citation>
    <scope>NUCLEOTIDE SEQUENCE [LARGE SCALE GENOMIC DNA]</scope>
    <source>
        <strain>AX4</strain>
    </source>
</reference>
<accession>Q55BW0</accession>
<comment type="catalytic activity">
    <reaction evidence="2">
        <text>GTP + H2O = GDP + phosphate + H(+)</text>
        <dbReference type="Rhea" id="RHEA:19669"/>
        <dbReference type="ChEBI" id="CHEBI:15377"/>
        <dbReference type="ChEBI" id="CHEBI:15378"/>
        <dbReference type="ChEBI" id="CHEBI:37565"/>
        <dbReference type="ChEBI" id="CHEBI:43474"/>
        <dbReference type="ChEBI" id="CHEBI:58189"/>
        <dbReference type="EC" id="3.6.5.2"/>
    </reaction>
</comment>
<comment type="subcellular location">
    <subcellularLocation>
        <location evidence="4">Cell membrane</location>
        <topology evidence="4">Lipid-anchor</topology>
        <orientation evidence="4">Cytoplasmic side</orientation>
    </subcellularLocation>
</comment>
<comment type="similarity">
    <text evidence="4">Belongs to the small GTPase superfamily. Ras family.</text>
</comment>
<dbReference type="EC" id="3.6.5.2" evidence="2"/>
<dbReference type="EMBL" id="AAFI02000005">
    <property type="protein sequence ID" value="EAL72520.1"/>
    <property type="molecule type" value="Genomic_DNA"/>
</dbReference>
<dbReference type="RefSeq" id="XP_646721.1">
    <property type="nucleotide sequence ID" value="XM_641629.1"/>
</dbReference>
<dbReference type="SMR" id="Q55BW0"/>
<dbReference type="FunCoup" id="Q55BW0">
    <property type="interactions" value="6"/>
</dbReference>
<dbReference type="STRING" id="44689.Q55BW0"/>
<dbReference type="PaxDb" id="44689-DDB0229440"/>
<dbReference type="EnsemblProtists" id="EAL72520">
    <property type="protein sequence ID" value="EAL72520"/>
    <property type="gene ID" value="DDB_G0270340"/>
</dbReference>
<dbReference type="GeneID" id="8617693"/>
<dbReference type="KEGG" id="ddi:DDB_G0270340"/>
<dbReference type="dictyBase" id="DDB_G0270340">
    <property type="gene designation" value="rapC"/>
</dbReference>
<dbReference type="VEuPathDB" id="AmoebaDB:DDB_G0270340"/>
<dbReference type="eggNOG" id="KOG0395">
    <property type="taxonomic scope" value="Eukaryota"/>
</dbReference>
<dbReference type="HOGENOM" id="CLU_041217_9_0_1"/>
<dbReference type="InParanoid" id="Q55BW0"/>
<dbReference type="OMA" id="HIMLEIM"/>
<dbReference type="PhylomeDB" id="Q55BW0"/>
<dbReference type="Reactome" id="R-DDI-6798695">
    <property type="pathway name" value="Neutrophil degranulation"/>
</dbReference>
<dbReference type="PRO" id="PR:Q55BW0"/>
<dbReference type="Proteomes" id="UP000002195">
    <property type="component" value="Chromosome 1"/>
</dbReference>
<dbReference type="GO" id="GO:0005886">
    <property type="term" value="C:plasma membrane"/>
    <property type="evidence" value="ECO:0000318"/>
    <property type="project" value="GO_Central"/>
</dbReference>
<dbReference type="GO" id="GO:0003925">
    <property type="term" value="F:G protein activity"/>
    <property type="evidence" value="ECO:0007669"/>
    <property type="project" value="UniProtKB-EC"/>
</dbReference>
<dbReference type="GO" id="GO:0019003">
    <property type="term" value="F:GDP binding"/>
    <property type="evidence" value="ECO:0000318"/>
    <property type="project" value="GO_Central"/>
</dbReference>
<dbReference type="GO" id="GO:0005525">
    <property type="term" value="F:GTP binding"/>
    <property type="evidence" value="ECO:0000318"/>
    <property type="project" value="GO_Central"/>
</dbReference>
<dbReference type="GO" id="GO:0003924">
    <property type="term" value="F:GTPase activity"/>
    <property type="evidence" value="ECO:0000318"/>
    <property type="project" value="GO_Central"/>
</dbReference>
<dbReference type="GO" id="GO:0000281">
    <property type="term" value="P:mitotic cytokinesis"/>
    <property type="evidence" value="ECO:0000315"/>
    <property type="project" value="dictyBase"/>
</dbReference>
<dbReference type="GO" id="GO:0010812">
    <property type="term" value="P:negative regulation of cell-substrate adhesion"/>
    <property type="evidence" value="ECO:0000315"/>
    <property type="project" value="dictyBase"/>
</dbReference>
<dbReference type="GO" id="GO:1900025">
    <property type="term" value="P:negative regulation of substrate adhesion-dependent cell spreading"/>
    <property type="evidence" value="ECO:0000314"/>
    <property type="project" value="dictyBase"/>
</dbReference>
<dbReference type="GO" id="GO:0030335">
    <property type="term" value="P:positive regulation of cell migration"/>
    <property type="evidence" value="ECO:0000315"/>
    <property type="project" value="dictyBase"/>
</dbReference>
<dbReference type="GO" id="GO:0061122">
    <property type="term" value="P:positive regulation of positive chemotaxis to cAMP"/>
    <property type="evidence" value="ECO:0000315"/>
    <property type="project" value="dictyBase"/>
</dbReference>
<dbReference type="GO" id="GO:0032465">
    <property type="term" value="P:regulation of cytokinesis"/>
    <property type="evidence" value="ECO:0000315"/>
    <property type="project" value="dictyBase"/>
</dbReference>
<dbReference type="GO" id="GO:0031156">
    <property type="term" value="P:regulation of sorocarp development"/>
    <property type="evidence" value="ECO:0000315"/>
    <property type="project" value="dictyBase"/>
</dbReference>
<dbReference type="GO" id="GO:0007165">
    <property type="term" value="P:signal transduction"/>
    <property type="evidence" value="ECO:0007669"/>
    <property type="project" value="InterPro"/>
</dbReference>
<dbReference type="GO" id="GO:0031288">
    <property type="term" value="P:sorocarp morphogenesis"/>
    <property type="evidence" value="ECO:0000315"/>
    <property type="project" value="dictyBase"/>
</dbReference>
<dbReference type="CDD" id="cd00876">
    <property type="entry name" value="Ras"/>
    <property type="match status" value="1"/>
</dbReference>
<dbReference type="FunFam" id="3.40.50.300:FF:001763">
    <property type="entry name" value="Ras family gtpase"/>
    <property type="match status" value="1"/>
</dbReference>
<dbReference type="Gene3D" id="3.40.50.300">
    <property type="entry name" value="P-loop containing nucleotide triphosphate hydrolases"/>
    <property type="match status" value="1"/>
</dbReference>
<dbReference type="InterPro" id="IPR027417">
    <property type="entry name" value="P-loop_NTPase"/>
</dbReference>
<dbReference type="InterPro" id="IPR005225">
    <property type="entry name" value="Small_GTP-bd"/>
</dbReference>
<dbReference type="InterPro" id="IPR001806">
    <property type="entry name" value="Small_GTPase"/>
</dbReference>
<dbReference type="InterPro" id="IPR020849">
    <property type="entry name" value="Small_GTPase_Ras-type"/>
</dbReference>
<dbReference type="NCBIfam" id="TIGR00231">
    <property type="entry name" value="small_GTP"/>
    <property type="match status" value="1"/>
</dbReference>
<dbReference type="PANTHER" id="PTHR24070">
    <property type="entry name" value="RAS, DI-RAS, AND RHEB FAMILY MEMBERS OF SMALL GTPASE SUPERFAMILY"/>
    <property type="match status" value="1"/>
</dbReference>
<dbReference type="Pfam" id="PF00071">
    <property type="entry name" value="Ras"/>
    <property type="match status" value="1"/>
</dbReference>
<dbReference type="PRINTS" id="PR00449">
    <property type="entry name" value="RASTRNSFRMNG"/>
</dbReference>
<dbReference type="SMART" id="SM00175">
    <property type="entry name" value="RAB"/>
    <property type="match status" value="1"/>
</dbReference>
<dbReference type="SMART" id="SM00176">
    <property type="entry name" value="RAN"/>
    <property type="match status" value="1"/>
</dbReference>
<dbReference type="SMART" id="SM00173">
    <property type="entry name" value="RAS"/>
    <property type="match status" value="1"/>
</dbReference>
<dbReference type="SMART" id="SM00174">
    <property type="entry name" value="RHO"/>
    <property type="match status" value="1"/>
</dbReference>
<dbReference type="SUPFAM" id="SSF52540">
    <property type="entry name" value="P-loop containing nucleoside triphosphate hydrolases"/>
    <property type="match status" value="1"/>
</dbReference>
<dbReference type="PROSITE" id="PS51421">
    <property type="entry name" value="RAS"/>
    <property type="match status" value="1"/>
</dbReference>
<feature type="chain" id="PRO_0000368236" description="Ras-related protein rapC">
    <location>
        <begin position="1"/>
        <end position="275"/>
    </location>
</feature>
<feature type="propeptide" id="PRO_0000369262" description="Removed in mature form" evidence="1">
    <location>
        <begin position="276"/>
        <end position="278"/>
    </location>
</feature>
<feature type="region of interest" description="Disordered" evidence="3">
    <location>
        <begin position="176"/>
        <end position="209"/>
    </location>
</feature>
<feature type="region of interest" description="Disordered" evidence="3">
    <location>
        <begin position="236"/>
        <end position="278"/>
    </location>
</feature>
<feature type="short sequence motif" description="Effector region">
    <location>
        <begin position="32"/>
        <end position="40"/>
    </location>
</feature>
<feature type="compositionally biased region" description="Low complexity" evidence="3">
    <location>
        <begin position="198"/>
        <end position="209"/>
    </location>
</feature>
<feature type="compositionally biased region" description="Low complexity" evidence="3">
    <location>
        <begin position="236"/>
        <end position="251"/>
    </location>
</feature>
<feature type="binding site" evidence="1">
    <location>
        <begin position="10"/>
        <end position="17"/>
    </location>
    <ligand>
        <name>GTP</name>
        <dbReference type="ChEBI" id="CHEBI:37565"/>
    </ligand>
</feature>
<feature type="binding site" evidence="1">
    <location>
        <begin position="58"/>
        <end position="62"/>
    </location>
    <ligand>
        <name>GTP</name>
        <dbReference type="ChEBI" id="CHEBI:37565"/>
    </ligand>
</feature>
<feature type="binding site" evidence="1">
    <location>
        <begin position="119"/>
        <end position="122"/>
    </location>
    <ligand>
        <name>GTP</name>
        <dbReference type="ChEBI" id="CHEBI:37565"/>
    </ligand>
</feature>
<feature type="modified residue" description="Cysteine methyl ester" evidence="1">
    <location>
        <position position="275"/>
    </location>
</feature>
<feature type="lipid moiety-binding region" description="S-geranylgeranyl cysteine" evidence="1">
    <location>
        <position position="275"/>
    </location>
</feature>
<name>RAPC_DICDI</name>
<proteinExistence type="inferred from homology"/>